<name>DTDA_SULTO</name>
<sequence>MDIRIIYSIQDAVGKTIKELGYKFEEINEDIIDFRYEKGDVIVVFSRHESSSKIPSLTVHYPGNPIDKTMGGEPKKLGIAFPSLLTSIYREIRKINIDIEKAIEATHHGPTYQHIPIIFVEIGSSKEYWENKELVKTLIEATLRGIDKYKDIECENKIVGFGGTHYTPYFSLLAEKSCVGHIISKYYLAELSNEVILQTVNNTIEKIDTVMFDNVNSKIREKIVNLLATYKLNFKFR</sequence>
<organism>
    <name type="scientific">Sulfurisphaera tokodaii (strain DSM 16993 / JCM 10545 / NBRC 100140 / 7)</name>
    <name type="common">Sulfolobus tokodaii</name>
    <dbReference type="NCBI Taxonomy" id="273063"/>
    <lineage>
        <taxon>Archaea</taxon>
        <taxon>Thermoproteota</taxon>
        <taxon>Thermoprotei</taxon>
        <taxon>Sulfolobales</taxon>
        <taxon>Sulfolobaceae</taxon>
        <taxon>Sulfurisphaera</taxon>
    </lineage>
</organism>
<proteinExistence type="inferred from homology"/>
<accession>Q96YQ2</accession>
<evidence type="ECO:0000255" key="1">
    <source>
        <dbReference type="HAMAP-Rule" id="MF_00562"/>
    </source>
</evidence>
<keyword id="KW-0378">Hydrolase</keyword>
<keyword id="KW-0479">Metal-binding</keyword>
<keyword id="KW-1185">Reference proteome</keyword>
<keyword id="KW-0862">Zinc</keyword>
<dbReference type="EC" id="3.1.1.96" evidence="1"/>
<dbReference type="EMBL" id="BA000023">
    <property type="protein sequence ID" value="BAB67225.1"/>
    <property type="molecule type" value="Genomic_DNA"/>
</dbReference>
<dbReference type="RefSeq" id="WP_010980200.1">
    <property type="nucleotide sequence ID" value="NC_003106.2"/>
</dbReference>
<dbReference type="SMR" id="Q96YQ2"/>
<dbReference type="STRING" id="273063.STK_21210"/>
<dbReference type="GeneID" id="1460193"/>
<dbReference type="KEGG" id="sto:STK_21210"/>
<dbReference type="PATRIC" id="fig|273063.9.peg.2413"/>
<dbReference type="eggNOG" id="arCOG01616">
    <property type="taxonomic scope" value="Archaea"/>
</dbReference>
<dbReference type="OrthoDB" id="9863at2157"/>
<dbReference type="Proteomes" id="UP000001015">
    <property type="component" value="Chromosome"/>
</dbReference>
<dbReference type="GO" id="GO:0051499">
    <property type="term" value="F:D-aminoacyl-tRNA deacylase activity"/>
    <property type="evidence" value="ECO:0007669"/>
    <property type="project" value="UniProtKB-UniRule"/>
</dbReference>
<dbReference type="GO" id="GO:0008270">
    <property type="term" value="F:zinc ion binding"/>
    <property type="evidence" value="ECO:0007669"/>
    <property type="project" value="UniProtKB-UniRule"/>
</dbReference>
<dbReference type="GO" id="GO:0019478">
    <property type="term" value="P:D-amino acid catabolic process"/>
    <property type="evidence" value="ECO:0007669"/>
    <property type="project" value="UniProtKB-UniRule"/>
</dbReference>
<dbReference type="Gene3D" id="3.40.50.10700">
    <property type="entry name" value="AF0625-like"/>
    <property type="match status" value="1"/>
</dbReference>
<dbReference type="Gene3D" id="3.40.630.50">
    <property type="entry name" value="AF0625-like"/>
    <property type="match status" value="1"/>
</dbReference>
<dbReference type="HAMAP" id="MF_00562">
    <property type="entry name" value="Deacylase_DtdA"/>
    <property type="match status" value="1"/>
</dbReference>
<dbReference type="InterPro" id="IPR018033">
    <property type="entry name" value="Deacylase_DtdA_archaea"/>
</dbReference>
<dbReference type="InterPro" id="IPR007508">
    <property type="entry name" value="DtdA"/>
</dbReference>
<dbReference type="NCBIfam" id="NF003070">
    <property type="entry name" value="PRK03995.1-1"/>
    <property type="match status" value="1"/>
</dbReference>
<dbReference type="PANTHER" id="PTHR34667">
    <property type="entry name" value="D-AMINOACYL-TRNA DEACYLASE"/>
    <property type="match status" value="1"/>
</dbReference>
<dbReference type="PANTHER" id="PTHR34667:SF1">
    <property type="entry name" value="D-AMINOACYL-TRNA DEACYLASE"/>
    <property type="match status" value="1"/>
</dbReference>
<dbReference type="Pfam" id="PF04414">
    <property type="entry name" value="tRNA_deacylase"/>
    <property type="match status" value="1"/>
</dbReference>
<dbReference type="PIRSF" id="PIRSF016210">
    <property type="entry name" value="UCP016210"/>
    <property type="match status" value="1"/>
</dbReference>
<dbReference type="SUPFAM" id="SSF142535">
    <property type="entry name" value="AF0625-like"/>
    <property type="match status" value="1"/>
</dbReference>
<feature type="chain" id="PRO_0000158975" description="D-aminoacyl-tRNA deacylase">
    <location>
        <begin position="1"/>
        <end position="237"/>
    </location>
</feature>
<comment type="function">
    <text evidence="1">D-aminoacyl-tRNA deacylase with broad substrate specificity. By recycling D-aminoacyl-tRNA to D-amino acids and free tRNA molecules, this enzyme counteracts the toxicity associated with the formation of D-aminoacyl-tRNA entities in vivo.</text>
</comment>
<comment type="catalytic activity">
    <reaction evidence="1">
        <text>a D-aminoacyl-tRNA + H2O = a tRNA + a D-alpha-amino acid + H(+)</text>
        <dbReference type="Rhea" id="RHEA:13953"/>
        <dbReference type="Rhea" id="RHEA-COMP:10123"/>
        <dbReference type="Rhea" id="RHEA-COMP:10124"/>
        <dbReference type="ChEBI" id="CHEBI:15377"/>
        <dbReference type="ChEBI" id="CHEBI:15378"/>
        <dbReference type="ChEBI" id="CHEBI:59871"/>
        <dbReference type="ChEBI" id="CHEBI:78442"/>
        <dbReference type="ChEBI" id="CHEBI:79333"/>
        <dbReference type="EC" id="3.1.1.96"/>
    </reaction>
</comment>
<comment type="catalytic activity">
    <reaction evidence="1">
        <text>glycyl-tRNA(Ala) + H2O = tRNA(Ala) + glycine + H(+)</text>
        <dbReference type="Rhea" id="RHEA:53744"/>
        <dbReference type="Rhea" id="RHEA-COMP:9657"/>
        <dbReference type="Rhea" id="RHEA-COMP:13640"/>
        <dbReference type="ChEBI" id="CHEBI:15377"/>
        <dbReference type="ChEBI" id="CHEBI:15378"/>
        <dbReference type="ChEBI" id="CHEBI:57305"/>
        <dbReference type="ChEBI" id="CHEBI:78442"/>
        <dbReference type="ChEBI" id="CHEBI:78522"/>
        <dbReference type="EC" id="3.1.1.96"/>
    </reaction>
</comment>
<comment type="cofactor">
    <cofactor evidence="1">
        <name>Zn(2+)</name>
        <dbReference type="ChEBI" id="CHEBI:29105"/>
    </cofactor>
    <text evidence="1">Binds 2 Zn(2+) ions per subunit.</text>
</comment>
<comment type="subunit">
    <text evidence="1">Monomer.</text>
</comment>
<comment type="similarity">
    <text evidence="1">Belongs to the DtdA deacylase family.</text>
</comment>
<protein>
    <recommendedName>
        <fullName evidence="1">D-aminoacyl-tRNA deacylase</fullName>
        <ecNumber evidence="1">3.1.1.96</ecNumber>
    </recommendedName>
    <alternativeName>
        <fullName>D-tyrosyl-tRNA(Tyr) deacylase</fullName>
    </alternativeName>
</protein>
<gene>
    <name evidence="1" type="primary">dtdA</name>
    <name type="ordered locus">STK_21210</name>
</gene>
<reference key="1">
    <citation type="journal article" date="2001" name="DNA Res.">
        <title>Complete genome sequence of an aerobic thermoacidophilic Crenarchaeon, Sulfolobus tokodaii strain7.</title>
        <authorList>
            <person name="Kawarabayasi Y."/>
            <person name="Hino Y."/>
            <person name="Horikawa H."/>
            <person name="Jin-no K."/>
            <person name="Takahashi M."/>
            <person name="Sekine M."/>
            <person name="Baba S."/>
            <person name="Ankai A."/>
            <person name="Kosugi H."/>
            <person name="Hosoyama A."/>
            <person name="Fukui S."/>
            <person name="Nagai Y."/>
            <person name="Nishijima K."/>
            <person name="Otsuka R."/>
            <person name="Nakazawa H."/>
            <person name="Takamiya M."/>
            <person name="Kato Y."/>
            <person name="Yoshizawa T."/>
            <person name="Tanaka T."/>
            <person name="Kudoh Y."/>
            <person name="Yamazaki J."/>
            <person name="Kushida N."/>
            <person name="Oguchi A."/>
            <person name="Aoki K."/>
            <person name="Masuda S."/>
            <person name="Yanagii M."/>
            <person name="Nishimura M."/>
            <person name="Yamagishi A."/>
            <person name="Oshima T."/>
            <person name="Kikuchi H."/>
        </authorList>
    </citation>
    <scope>NUCLEOTIDE SEQUENCE [LARGE SCALE GENOMIC DNA]</scope>
    <source>
        <strain>DSM 16993 / JCM 10545 / NBRC 100140 / 7</strain>
    </source>
</reference>